<keyword id="KW-0186">Copper</keyword>
<keyword id="KW-0187">Copper transport</keyword>
<keyword id="KW-0406">Ion transport</keyword>
<keyword id="KW-0472">Membrane</keyword>
<keyword id="KW-1185">Reference proteome</keyword>
<keyword id="KW-0812">Transmembrane</keyword>
<keyword id="KW-1133">Transmembrane helix</keyword>
<keyword id="KW-0813">Transport</keyword>
<evidence type="ECO:0000255" key="1"/>
<evidence type="ECO:0000269" key="2">
    <source>
    </source>
</evidence>
<evidence type="ECO:0000305" key="3"/>
<comment type="function">
    <text evidence="2">Involved in the transport of copper.</text>
</comment>
<comment type="subcellular location">
    <subcellularLocation>
        <location evidence="3">Membrane</location>
        <topology evidence="3">Multi-pass membrane protein</topology>
    </subcellularLocation>
</comment>
<comment type="tissue specificity">
    <text evidence="2">Highly expressed in stems and at lower levels in leaves and flowers.</text>
</comment>
<comment type="induction">
    <text evidence="2">No change in expression levels after treatment with high concentrations of copper.</text>
</comment>
<comment type="similarity">
    <text evidence="3">Belongs to the copper transporter (Ctr) (TC 1.A.56) family. SLC31A subfamily.</text>
</comment>
<feature type="chain" id="PRO_0000399994" description="Copper transporter 3">
    <location>
        <begin position="1"/>
        <end position="151"/>
    </location>
</feature>
<feature type="transmembrane region" description="Helical" evidence="1">
    <location>
        <begin position="52"/>
        <end position="72"/>
    </location>
</feature>
<feature type="transmembrane region" description="Helical" evidence="1">
    <location>
        <begin position="103"/>
        <end position="123"/>
    </location>
</feature>
<feature type="sequence conflict" description="In Ref. 4; AAM64901." evidence="3" ref="4">
    <original>GKT</original>
    <variation>VKN</variation>
    <location>
        <begin position="37"/>
        <end position="39"/>
    </location>
</feature>
<organism>
    <name type="scientific">Arabidopsis thaliana</name>
    <name type="common">Mouse-ear cress</name>
    <dbReference type="NCBI Taxonomy" id="3702"/>
    <lineage>
        <taxon>Eukaryota</taxon>
        <taxon>Viridiplantae</taxon>
        <taxon>Streptophyta</taxon>
        <taxon>Embryophyta</taxon>
        <taxon>Tracheophyta</taxon>
        <taxon>Spermatophyta</taxon>
        <taxon>Magnoliopsida</taxon>
        <taxon>eudicotyledons</taxon>
        <taxon>Gunneridae</taxon>
        <taxon>Pentapetalae</taxon>
        <taxon>rosids</taxon>
        <taxon>malvids</taxon>
        <taxon>Brassicales</taxon>
        <taxon>Brassicaceae</taxon>
        <taxon>Camelineae</taxon>
        <taxon>Arabidopsis</taxon>
    </lineage>
</organism>
<name>COPT3_ARATH</name>
<dbReference type="EMBL" id="AB024027">
    <property type="protein sequence ID" value="BAB10780.1"/>
    <property type="molecule type" value="Genomic_DNA"/>
</dbReference>
<dbReference type="EMBL" id="CP002688">
    <property type="protein sequence ID" value="AED97133.1"/>
    <property type="molecule type" value="Genomic_DNA"/>
</dbReference>
<dbReference type="EMBL" id="DQ447093">
    <property type="protein sequence ID" value="ABE66262.1"/>
    <property type="molecule type" value="mRNA"/>
</dbReference>
<dbReference type="EMBL" id="AY087351">
    <property type="protein sequence ID" value="AAM64901.1"/>
    <property type="molecule type" value="mRNA"/>
</dbReference>
<dbReference type="EMBL" id="AF466371">
    <property type="protein sequence ID" value="AAL74263.1"/>
    <property type="molecule type" value="mRNA"/>
</dbReference>
<dbReference type="RefSeq" id="NP_200712.1">
    <property type="nucleotide sequence ID" value="NM_125294.3"/>
</dbReference>
<dbReference type="SMR" id="Q9FGU8"/>
<dbReference type="FunCoup" id="Q9FGU8">
    <property type="interactions" value="1100"/>
</dbReference>
<dbReference type="STRING" id="3702.Q9FGU8"/>
<dbReference type="PaxDb" id="3702-AT5G59040.1"/>
<dbReference type="ProteomicsDB" id="241171"/>
<dbReference type="EnsemblPlants" id="AT5G59040.1">
    <property type="protein sequence ID" value="AT5G59040.1"/>
    <property type="gene ID" value="AT5G59040"/>
</dbReference>
<dbReference type="GeneID" id="836021"/>
<dbReference type="Gramene" id="AT5G59040.1">
    <property type="protein sequence ID" value="AT5G59040.1"/>
    <property type="gene ID" value="AT5G59040"/>
</dbReference>
<dbReference type="KEGG" id="ath:AT5G59040"/>
<dbReference type="Araport" id="AT5G59040"/>
<dbReference type="TAIR" id="AT5G59040">
    <property type="gene designation" value="COPT3"/>
</dbReference>
<dbReference type="eggNOG" id="KOG3386">
    <property type="taxonomic scope" value="Eukaryota"/>
</dbReference>
<dbReference type="HOGENOM" id="CLU_079690_1_2_1"/>
<dbReference type="InParanoid" id="Q9FGU8"/>
<dbReference type="OMA" id="FFWGHRV"/>
<dbReference type="PhylomeDB" id="Q9FGU8"/>
<dbReference type="PRO" id="PR:Q9FGU8"/>
<dbReference type="Proteomes" id="UP000006548">
    <property type="component" value="Chromosome 5"/>
</dbReference>
<dbReference type="ExpressionAtlas" id="Q9FGU8">
    <property type="expression patterns" value="baseline and differential"/>
</dbReference>
<dbReference type="GO" id="GO:0016020">
    <property type="term" value="C:membrane"/>
    <property type="evidence" value="ECO:0007669"/>
    <property type="project" value="UniProtKB-SubCell"/>
</dbReference>
<dbReference type="GO" id="GO:0005375">
    <property type="term" value="F:copper ion transmembrane transporter activity"/>
    <property type="evidence" value="ECO:0007669"/>
    <property type="project" value="InterPro"/>
</dbReference>
<dbReference type="InterPro" id="IPR007274">
    <property type="entry name" value="Cop_transporter"/>
</dbReference>
<dbReference type="PANTHER" id="PTHR12483:SF81">
    <property type="entry name" value="COPPER TRANSPORTER 3"/>
    <property type="match status" value="1"/>
</dbReference>
<dbReference type="PANTHER" id="PTHR12483">
    <property type="entry name" value="SOLUTE CARRIER FAMILY 31 COPPER TRANSPORTERS"/>
    <property type="match status" value="1"/>
</dbReference>
<dbReference type="Pfam" id="PF04145">
    <property type="entry name" value="Ctr"/>
    <property type="match status" value="1"/>
</dbReference>
<gene>
    <name type="primary">COPT3</name>
    <name type="ordered locus">At5g59040</name>
    <name type="ORF">K18B18.3</name>
</gene>
<reference key="1">
    <citation type="journal article" date="2000" name="DNA Res.">
        <title>Structural analysis of Arabidopsis thaliana chromosome 5. X. Sequence features of the regions of 3,076,755 bp covered by sixty P1 and TAC clones.</title>
        <authorList>
            <person name="Sato S."/>
            <person name="Nakamura Y."/>
            <person name="Kaneko T."/>
            <person name="Katoh T."/>
            <person name="Asamizu E."/>
            <person name="Kotani H."/>
            <person name="Tabata S."/>
        </authorList>
    </citation>
    <scope>NUCLEOTIDE SEQUENCE [LARGE SCALE GENOMIC DNA]</scope>
    <source>
        <strain>cv. Columbia</strain>
    </source>
</reference>
<reference key="2">
    <citation type="journal article" date="2017" name="Plant J.">
        <title>Araport11: a complete reannotation of the Arabidopsis thaliana reference genome.</title>
        <authorList>
            <person name="Cheng C.Y."/>
            <person name="Krishnakumar V."/>
            <person name="Chan A.P."/>
            <person name="Thibaud-Nissen F."/>
            <person name="Schobel S."/>
            <person name="Town C.D."/>
        </authorList>
    </citation>
    <scope>GENOME REANNOTATION</scope>
    <source>
        <strain>cv. Columbia</strain>
    </source>
</reference>
<reference key="3">
    <citation type="journal article" date="2006" name="Plant Biotechnol. J.">
        <title>Simultaneous high-throughput recombinational cloning of open reading frames in closed and open configurations.</title>
        <authorList>
            <person name="Underwood B.A."/>
            <person name="Vanderhaeghen R."/>
            <person name="Whitford R."/>
            <person name="Town C.D."/>
            <person name="Hilson P."/>
        </authorList>
    </citation>
    <scope>NUCLEOTIDE SEQUENCE [LARGE SCALE MRNA]</scope>
    <source>
        <strain>cv. Columbia</strain>
    </source>
</reference>
<reference key="4">
    <citation type="submission" date="2002-03" db="EMBL/GenBank/DDBJ databases">
        <title>Full-length cDNA from Arabidopsis thaliana.</title>
        <authorList>
            <person name="Brover V.V."/>
            <person name="Troukhan M.E."/>
            <person name="Alexandrov N.A."/>
            <person name="Lu Y.-P."/>
            <person name="Flavell R.B."/>
            <person name="Feldmann K.A."/>
        </authorList>
    </citation>
    <scope>NUCLEOTIDE SEQUENCE [LARGE SCALE MRNA]</scope>
</reference>
<reference key="5">
    <citation type="journal article" date="2003" name="Plant Mol. Biol.">
        <title>Identification of a copper transporter family in Arabidopsis thaliana.</title>
        <authorList>
            <person name="Sancenon V."/>
            <person name="Puig S."/>
            <person name="Mira H."/>
            <person name="Thiele D.J."/>
            <person name="Penarrubia L."/>
        </authorList>
    </citation>
    <scope>NUCLEOTIDE SEQUENCE [MRNA] OF 20-151</scope>
    <scope>FUNCTION</scope>
    <scope>TISSUE SPECIFICITY</scope>
    <scope>INDUCTION</scope>
    <scope>GENE FAMILY</scope>
    <scope>NOMENCLATURE</scope>
</reference>
<protein>
    <recommendedName>
        <fullName>Copper transporter 3</fullName>
        <shortName>AtCOPT3</shortName>
    </recommendedName>
</protein>
<proteinExistence type="evidence at transcript level"/>
<sequence>MNGMSGSSPAAPAPSPSSFFQHRHRHGGMMHMTFFWGKTTEVLFDGWPGTSLKMYWVCLAVIFVISAFSECLSRCGFMKSGPASLGGGLLQTAVYTVRAALSYLVMLAVMSFNGGVFVAAMAGFGLGFMIFGSRAFRATSSNSHTEVQSHC</sequence>
<accession>Q9FGU8</accession>
<accession>Q8LB92</accession>
<accession>Q8SAA6</accession>